<name>FTHS_BACC3</name>
<keyword id="KW-0067">ATP-binding</keyword>
<keyword id="KW-0436">Ligase</keyword>
<keyword id="KW-0547">Nucleotide-binding</keyword>
<keyword id="KW-0554">One-carbon metabolism</keyword>
<dbReference type="EC" id="6.3.4.3" evidence="1"/>
<dbReference type="EMBL" id="CP001407">
    <property type="protein sequence ID" value="ACO26995.1"/>
    <property type="molecule type" value="Genomic_DNA"/>
</dbReference>
<dbReference type="RefSeq" id="WP_001985392.1">
    <property type="nucleotide sequence ID" value="NZ_CP009318.1"/>
</dbReference>
<dbReference type="SMR" id="C1ES77"/>
<dbReference type="KEGG" id="bcx:BCA_2195"/>
<dbReference type="UniPathway" id="UPA00193"/>
<dbReference type="Proteomes" id="UP000002210">
    <property type="component" value="Chromosome"/>
</dbReference>
<dbReference type="GO" id="GO:0005524">
    <property type="term" value="F:ATP binding"/>
    <property type="evidence" value="ECO:0007669"/>
    <property type="project" value="UniProtKB-UniRule"/>
</dbReference>
<dbReference type="GO" id="GO:0004329">
    <property type="term" value="F:formate-tetrahydrofolate ligase activity"/>
    <property type="evidence" value="ECO:0007669"/>
    <property type="project" value="UniProtKB-UniRule"/>
</dbReference>
<dbReference type="GO" id="GO:0035999">
    <property type="term" value="P:tetrahydrofolate interconversion"/>
    <property type="evidence" value="ECO:0007669"/>
    <property type="project" value="UniProtKB-UniRule"/>
</dbReference>
<dbReference type="CDD" id="cd00477">
    <property type="entry name" value="FTHFS"/>
    <property type="match status" value="1"/>
</dbReference>
<dbReference type="FunFam" id="3.30.1510.10:FF:000001">
    <property type="entry name" value="Formate--tetrahydrofolate ligase"/>
    <property type="match status" value="1"/>
</dbReference>
<dbReference type="FunFam" id="3.10.410.10:FF:000001">
    <property type="entry name" value="Putative formate--tetrahydrofolate ligase"/>
    <property type="match status" value="1"/>
</dbReference>
<dbReference type="Gene3D" id="3.30.1510.10">
    <property type="entry name" value="Domain 2, N(10)-formyltetrahydrofolate synthetase"/>
    <property type="match status" value="1"/>
</dbReference>
<dbReference type="Gene3D" id="3.10.410.10">
    <property type="entry name" value="Formyltetrahydrofolate synthetase, domain 3"/>
    <property type="match status" value="1"/>
</dbReference>
<dbReference type="Gene3D" id="3.40.50.300">
    <property type="entry name" value="P-loop containing nucleotide triphosphate hydrolases"/>
    <property type="match status" value="1"/>
</dbReference>
<dbReference type="HAMAP" id="MF_01543">
    <property type="entry name" value="FTHFS"/>
    <property type="match status" value="1"/>
</dbReference>
<dbReference type="InterPro" id="IPR000559">
    <property type="entry name" value="Formate_THF_ligase"/>
</dbReference>
<dbReference type="InterPro" id="IPR020628">
    <property type="entry name" value="Formate_THF_ligase_CS"/>
</dbReference>
<dbReference type="InterPro" id="IPR027417">
    <property type="entry name" value="P-loop_NTPase"/>
</dbReference>
<dbReference type="NCBIfam" id="NF010030">
    <property type="entry name" value="PRK13505.1"/>
    <property type="match status" value="1"/>
</dbReference>
<dbReference type="Pfam" id="PF01268">
    <property type="entry name" value="FTHFS"/>
    <property type="match status" value="1"/>
</dbReference>
<dbReference type="SUPFAM" id="SSF52540">
    <property type="entry name" value="P-loop containing nucleoside triphosphate hydrolases"/>
    <property type="match status" value="1"/>
</dbReference>
<dbReference type="PROSITE" id="PS00721">
    <property type="entry name" value="FTHFS_1"/>
    <property type="match status" value="1"/>
</dbReference>
<dbReference type="PROSITE" id="PS00722">
    <property type="entry name" value="FTHFS_2"/>
    <property type="match status" value="1"/>
</dbReference>
<feature type="chain" id="PRO_1000185246" description="Formate--tetrahydrofolate ligase">
    <location>
        <begin position="1"/>
        <end position="562"/>
    </location>
</feature>
<feature type="binding site" evidence="1">
    <location>
        <begin position="71"/>
        <end position="78"/>
    </location>
    <ligand>
        <name>ATP</name>
        <dbReference type="ChEBI" id="CHEBI:30616"/>
    </ligand>
</feature>
<proteinExistence type="inferred from homology"/>
<accession>C1ES77</accession>
<reference key="1">
    <citation type="submission" date="2009-02" db="EMBL/GenBank/DDBJ databases">
        <title>Genome sequence of Bacillus cereus 03BB102.</title>
        <authorList>
            <person name="Dodson R.J."/>
            <person name="Jackson P."/>
            <person name="Munk A.C."/>
            <person name="Brettin T."/>
            <person name="Bruce D."/>
            <person name="Detter C."/>
            <person name="Tapia R."/>
            <person name="Han C."/>
            <person name="Sutton G."/>
            <person name="Sims D."/>
        </authorList>
    </citation>
    <scope>NUCLEOTIDE SEQUENCE [LARGE SCALE GENOMIC DNA]</scope>
    <source>
        <strain>03BB102</strain>
    </source>
</reference>
<comment type="catalytic activity">
    <reaction evidence="1">
        <text>(6S)-5,6,7,8-tetrahydrofolate + formate + ATP = (6R)-10-formyltetrahydrofolate + ADP + phosphate</text>
        <dbReference type="Rhea" id="RHEA:20221"/>
        <dbReference type="ChEBI" id="CHEBI:15740"/>
        <dbReference type="ChEBI" id="CHEBI:30616"/>
        <dbReference type="ChEBI" id="CHEBI:43474"/>
        <dbReference type="ChEBI" id="CHEBI:57453"/>
        <dbReference type="ChEBI" id="CHEBI:195366"/>
        <dbReference type="ChEBI" id="CHEBI:456216"/>
        <dbReference type="EC" id="6.3.4.3"/>
    </reaction>
</comment>
<comment type="pathway">
    <text evidence="1">One-carbon metabolism; tetrahydrofolate interconversion.</text>
</comment>
<comment type="similarity">
    <text evidence="1">Belongs to the formate--tetrahydrofolate ligase family.</text>
</comment>
<gene>
    <name evidence="1" type="primary">fhs</name>
    <name type="ordered locus">BCA_2195</name>
</gene>
<sequence length="562" mass="60462">MTTTTTVKSDIEIAQEASMKKIQEIAADLNILEDELEPYGHYKGKLSLDIFKRLQNEKDGKVVLVTAINPTPAGEGKSTVTVGLGQAFNKIGKKTVIALREPSLGPTMGLKGGAAGGGFSQVVPMEDINLHFTGDIHAITTANNALAAFIDNHIQQGNTLGIDTRKIVWKRCVDLNDRALRNVVIGLGGPVQGVPREDGFDITVASEIMAVFCLATDIQDLKARLSRIVVAYNFANQPVTVKDLGVEGALTLLLKDALKPNLVQTLENTPAIIHGGPFANIAHGCNSVIATTMAAKLGDYVITEAGFGADLGAEKFLDIKARAAGIKPEAVVIVATIRALKMHGGVAKDQLKEENVDALAKGMENLQKHVETIQSFGVPFVIAINKFITDTDAEVAYLQEWCNERGYAVSLTEVWEKGGQGGVDLAEKVLKEIEKGENNYAPLYELELPLEEKIRTIAQKVYGAKDIEFAPKARKQLAQYEGEGWSNLPICMAKTQYSLSDDATKLGRPSDFIVTIRELKPSIGAGFIVALTGTMLTMPGLPKQPAALQMDVNEDGKAVGLF</sequence>
<protein>
    <recommendedName>
        <fullName evidence="1">Formate--tetrahydrofolate ligase</fullName>
        <ecNumber evidence="1">6.3.4.3</ecNumber>
    </recommendedName>
    <alternativeName>
        <fullName evidence="1">Formyltetrahydrofolate synthetase</fullName>
        <shortName evidence="1">FHS</shortName>
        <shortName evidence="1">FTHFS</shortName>
    </alternativeName>
</protein>
<evidence type="ECO:0000255" key="1">
    <source>
        <dbReference type="HAMAP-Rule" id="MF_01543"/>
    </source>
</evidence>
<organism>
    <name type="scientific">Bacillus cereus (strain 03BB102)</name>
    <dbReference type="NCBI Taxonomy" id="572264"/>
    <lineage>
        <taxon>Bacteria</taxon>
        <taxon>Bacillati</taxon>
        <taxon>Bacillota</taxon>
        <taxon>Bacilli</taxon>
        <taxon>Bacillales</taxon>
        <taxon>Bacillaceae</taxon>
        <taxon>Bacillus</taxon>
        <taxon>Bacillus cereus group</taxon>
    </lineage>
</organism>